<proteinExistence type="evidence at protein level"/>
<dbReference type="SMR" id="P24775"/>
<dbReference type="iPTMnet" id="P24775"/>
<dbReference type="Proteomes" id="UP000694395">
    <property type="component" value="Unplaced"/>
</dbReference>
<dbReference type="GO" id="GO:0005615">
    <property type="term" value="C:extracellular space"/>
    <property type="evidence" value="ECO:0000314"/>
    <property type="project" value="UniProtKB"/>
</dbReference>
<dbReference type="GO" id="GO:0060417">
    <property type="term" value="C:yolk"/>
    <property type="evidence" value="ECO:0000314"/>
    <property type="project" value="AgBase"/>
</dbReference>
<dbReference type="GO" id="GO:0019841">
    <property type="term" value="F:retinol binding"/>
    <property type="evidence" value="ECO:0007669"/>
    <property type="project" value="UniProtKB-KW"/>
</dbReference>
<dbReference type="GO" id="GO:0034632">
    <property type="term" value="F:retinol transmembrane transporter activity"/>
    <property type="evidence" value="ECO:0007669"/>
    <property type="project" value="InterPro"/>
</dbReference>
<dbReference type="FunFam" id="2.40.128.20:FF:000004">
    <property type="entry name" value="Retinol-binding protein 4"/>
    <property type="match status" value="1"/>
</dbReference>
<dbReference type="Gene3D" id="2.40.128.20">
    <property type="match status" value="1"/>
</dbReference>
<dbReference type="InterPro" id="IPR012674">
    <property type="entry name" value="Calycin"/>
</dbReference>
<dbReference type="InterPro" id="IPR022271">
    <property type="entry name" value="Lipocalin_ApoD"/>
</dbReference>
<dbReference type="InterPro" id="IPR022272">
    <property type="entry name" value="Lipocalin_CS"/>
</dbReference>
<dbReference type="InterPro" id="IPR000566">
    <property type="entry name" value="Lipocln_cytosolic_FA-bd_dom"/>
</dbReference>
<dbReference type="InterPro" id="IPR002449">
    <property type="entry name" value="Retinol-bd/Purpurin"/>
</dbReference>
<dbReference type="PANTHER" id="PTHR11873">
    <property type="entry name" value="RETINOL-BINDING PROTEIN 4"/>
    <property type="match status" value="1"/>
</dbReference>
<dbReference type="PANTHER" id="PTHR11873:SF2">
    <property type="entry name" value="RETINOL-BINDING PROTEIN 4"/>
    <property type="match status" value="1"/>
</dbReference>
<dbReference type="Pfam" id="PF00061">
    <property type="entry name" value="Lipocalin"/>
    <property type="match status" value="1"/>
</dbReference>
<dbReference type="PIRSF" id="PIRSF036893">
    <property type="entry name" value="Lipocalin_ApoD"/>
    <property type="match status" value="1"/>
</dbReference>
<dbReference type="PIRSF" id="PIRSF500204">
    <property type="entry name" value="RBP_purpurin"/>
    <property type="match status" value="1"/>
</dbReference>
<dbReference type="PRINTS" id="PR00179">
    <property type="entry name" value="LIPOCALIN"/>
</dbReference>
<dbReference type="PRINTS" id="PR01174">
    <property type="entry name" value="RETINOLBNDNG"/>
</dbReference>
<dbReference type="SUPFAM" id="SSF50814">
    <property type="entry name" value="Lipocalins"/>
    <property type="match status" value="1"/>
</dbReference>
<dbReference type="PROSITE" id="PS00213">
    <property type="entry name" value="LIPOCALIN"/>
    <property type="match status" value="1"/>
</dbReference>
<feature type="chain" id="PRO_0000201030" description="Retinol-binding protein 4-B">
    <location>
        <begin position="1"/>
        <end position="176"/>
    </location>
</feature>
<feature type="binding site" evidence="3">
    <location>
        <position position="97"/>
    </location>
    <ligand>
        <name>substrate</name>
    </ligand>
</feature>
<feature type="modified residue" description="N-acetylserine" evidence="6">
    <location>
        <position position="1"/>
    </location>
</feature>
<feature type="disulfide bond" evidence="1">
    <location>
        <begin position="3"/>
        <end position="159"/>
    </location>
</feature>
<feature type="disulfide bond" evidence="1">
    <location>
        <begin position="69"/>
        <end position="173"/>
    </location>
</feature>
<feature type="disulfide bond" evidence="1">
    <location>
        <begin position="119"/>
        <end position="128"/>
    </location>
</feature>
<evidence type="ECO:0000250" key="1">
    <source>
        <dbReference type="UniProtKB" id="P02753"/>
    </source>
</evidence>
<evidence type="ECO:0000250" key="2">
    <source>
        <dbReference type="UniProtKB" id="P04916"/>
    </source>
</evidence>
<evidence type="ECO:0000250" key="3">
    <source>
        <dbReference type="UniProtKB" id="P27485"/>
    </source>
</evidence>
<evidence type="ECO:0000269" key="4">
    <source>
    </source>
</evidence>
<evidence type="ECO:0000305" key="5"/>
<evidence type="ECO:0000305" key="6">
    <source>
    </source>
</evidence>
<accession>P24775</accession>
<accession>P80066</accession>
<keyword id="KW-0007">Acetylation</keyword>
<keyword id="KW-0903">Direct protein sequencing</keyword>
<keyword id="KW-1015">Disulfide bond</keyword>
<keyword id="KW-0683">Retinol-binding</keyword>
<keyword id="KW-0964">Secreted</keyword>
<keyword id="KW-0813">Transport</keyword>
<comment type="function">
    <text evidence="2">RBP delivers retinol from the liver stores to the peripheral tissues. In plasma, the RBP-retinol complex interacts with transthyretin, this prevents its loss by filtration through the kidney glomeruli.</text>
</comment>
<comment type="subcellular location">
    <subcellularLocation>
        <location evidence="4">Secreted</location>
    </subcellularLocation>
</comment>
<comment type="similarity">
    <text evidence="5">Belongs to the calycin superfamily. Lipocalin family.</text>
</comment>
<gene>
    <name type="primary">rbp4b</name>
</gene>
<organism>
    <name type="scientific">Oncorhynchus mykiss</name>
    <name type="common">Rainbow trout</name>
    <name type="synonym">Salmo gairdneri</name>
    <dbReference type="NCBI Taxonomy" id="8022"/>
    <lineage>
        <taxon>Eukaryota</taxon>
        <taxon>Metazoa</taxon>
        <taxon>Chordata</taxon>
        <taxon>Craniata</taxon>
        <taxon>Vertebrata</taxon>
        <taxon>Euteleostomi</taxon>
        <taxon>Actinopterygii</taxon>
        <taxon>Neopterygii</taxon>
        <taxon>Teleostei</taxon>
        <taxon>Protacanthopterygii</taxon>
        <taxon>Salmoniformes</taxon>
        <taxon>Salmonidae</taxon>
        <taxon>Salmoninae</taxon>
        <taxon>Oncorhynchus</taxon>
    </lineage>
</organism>
<protein>
    <recommendedName>
        <fullName>Retinol-binding protein 4-B</fullName>
    </recommendedName>
    <alternativeName>
        <fullName>Plasma retinol-binding protein 2</fullName>
        <shortName>PRBP-2</shortName>
    </alternativeName>
    <alternativeName>
        <fullName>Plasma retinol-binding protein II</fullName>
        <shortName>PRBP-II</shortName>
    </alternativeName>
</protein>
<sequence>SDCQVSNIQVMQNFDRSRYTGRWYAVAKKDPVGLFLLDNVVAQFSVDGSGKVTATAQGRVIILNNWEMCANMFGTFEDTPDPAKFKMRYWGAAAYLQSGNDDHWVIDTDYDNYAIHYSCREVDLDGTCLDGYSFIFSRHPTGLRPEDQKIVTDKKKELCFLGKYRRVSHTGFCESS</sequence>
<name>RET4B_ONCMY</name>
<reference key="1">
    <citation type="journal article" date="1992" name="Eur. J. Biochem.">
        <title>The primary structure of piscine (Oncorhynchus mykiss) retinol-binding protein and a comparison with the three-dimensional structure of mammalian retinol-binding protein.</title>
        <authorList>
            <person name="Zapponi M.C."/>
            <person name="Zanotti G."/>
            <person name="Stoppini M."/>
            <person name="Berni R."/>
        </authorList>
    </citation>
    <scope>PROTEIN SEQUENCE</scope>
    <scope>3D-STRUCTURE MODELING</scope>
</reference>
<reference key="2">
    <citation type="journal article" date="1992" name="Eur. J. Biochem.">
        <title>The piscine plasma retinol-binding protein. Purification, partial amino acid sequence and interaction with mammalian transthyretin of rainbow trout (Oncorhynchus mykiss) retinol-binding protein.</title>
        <authorList>
            <person name="Berni R."/>
            <person name="Stoppini M."/>
            <person name="Zapponi M.C."/>
        </authorList>
    </citation>
    <scope>PARTIAL PROTEIN SEQUENCE</scope>
    <scope>ACETYLATION AT SER-1</scope>
    <scope>SUBCELLULAR LOCATION</scope>
</reference>